<gene>
    <name type="primary">TAF1D</name>
    <name type="synonym">JOSD3</name>
</gene>
<accession>Q9H5J8</accession>
<accession>Q6I9Y6</accession>
<reference key="1">
    <citation type="journal article" date="2004" name="Cancer Res.">
        <title>A novel nuclear protein, MGC5306 interacts with DNA polymerase beta and has a potential role in cellular phenotype.</title>
        <authorList>
            <person name="Wang L."/>
            <person name="Bhattacharyya N."/>
            <person name="Chelsea D.M."/>
            <person name="Escobar P.F."/>
            <person name="Banerjee S."/>
        </authorList>
    </citation>
    <scope>NUCLEOTIDE SEQUENCE [MRNA]</scope>
    <scope>SUBCELLULAR LOCATION</scope>
</reference>
<reference key="2">
    <citation type="journal article" date="2004" name="Nat. Genet.">
        <title>Complete sequencing and characterization of 21,243 full-length human cDNAs.</title>
        <authorList>
            <person name="Ota T."/>
            <person name="Suzuki Y."/>
            <person name="Nishikawa T."/>
            <person name="Otsuki T."/>
            <person name="Sugiyama T."/>
            <person name="Irie R."/>
            <person name="Wakamatsu A."/>
            <person name="Hayashi K."/>
            <person name="Sato H."/>
            <person name="Nagai K."/>
            <person name="Kimura K."/>
            <person name="Makita H."/>
            <person name="Sekine M."/>
            <person name="Obayashi M."/>
            <person name="Nishi T."/>
            <person name="Shibahara T."/>
            <person name="Tanaka T."/>
            <person name="Ishii S."/>
            <person name="Yamamoto J."/>
            <person name="Saito K."/>
            <person name="Kawai Y."/>
            <person name="Isono Y."/>
            <person name="Nakamura Y."/>
            <person name="Nagahari K."/>
            <person name="Murakami K."/>
            <person name="Yasuda T."/>
            <person name="Iwayanagi T."/>
            <person name="Wagatsuma M."/>
            <person name="Shiratori A."/>
            <person name="Sudo H."/>
            <person name="Hosoiri T."/>
            <person name="Kaku Y."/>
            <person name="Kodaira H."/>
            <person name="Kondo H."/>
            <person name="Sugawara M."/>
            <person name="Takahashi M."/>
            <person name="Kanda K."/>
            <person name="Yokoi T."/>
            <person name="Furuya T."/>
            <person name="Kikkawa E."/>
            <person name="Omura Y."/>
            <person name="Abe K."/>
            <person name="Kamihara K."/>
            <person name="Katsuta N."/>
            <person name="Sato K."/>
            <person name="Tanikawa M."/>
            <person name="Yamazaki M."/>
            <person name="Ninomiya K."/>
            <person name="Ishibashi T."/>
            <person name="Yamashita H."/>
            <person name="Murakawa K."/>
            <person name="Fujimori K."/>
            <person name="Tanai H."/>
            <person name="Kimata M."/>
            <person name="Watanabe M."/>
            <person name="Hiraoka S."/>
            <person name="Chiba Y."/>
            <person name="Ishida S."/>
            <person name="Ono Y."/>
            <person name="Takiguchi S."/>
            <person name="Watanabe S."/>
            <person name="Yosida M."/>
            <person name="Hotuta T."/>
            <person name="Kusano J."/>
            <person name="Kanehori K."/>
            <person name="Takahashi-Fujii A."/>
            <person name="Hara H."/>
            <person name="Tanase T.-O."/>
            <person name="Nomura Y."/>
            <person name="Togiya S."/>
            <person name="Komai F."/>
            <person name="Hara R."/>
            <person name="Takeuchi K."/>
            <person name="Arita M."/>
            <person name="Imose N."/>
            <person name="Musashino K."/>
            <person name="Yuuki H."/>
            <person name="Oshima A."/>
            <person name="Sasaki N."/>
            <person name="Aotsuka S."/>
            <person name="Yoshikawa Y."/>
            <person name="Matsunawa H."/>
            <person name="Ichihara T."/>
            <person name="Shiohata N."/>
            <person name="Sano S."/>
            <person name="Moriya S."/>
            <person name="Momiyama H."/>
            <person name="Satoh N."/>
            <person name="Takami S."/>
            <person name="Terashima Y."/>
            <person name="Suzuki O."/>
            <person name="Nakagawa S."/>
            <person name="Senoh A."/>
            <person name="Mizoguchi H."/>
            <person name="Goto Y."/>
            <person name="Shimizu F."/>
            <person name="Wakebe H."/>
            <person name="Hishigaki H."/>
            <person name="Watanabe T."/>
            <person name="Sugiyama A."/>
            <person name="Takemoto M."/>
            <person name="Kawakami B."/>
            <person name="Yamazaki M."/>
            <person name="Watanabe K."/>
            <person name="Kumagai A."/>
            <person name="Itakura S."/>
            <person name="Fukuzumi Y."/>
            <person name="Fujimori Y."/>
            <person name="Komiyama M."/>
            <person name="Tashiro H."/>
            <person name="Tanigami A."/>
            <person name="Fujiwara T."/>
            <person name="Ono T."/>
            <person name="Yamada K."/>
            <person name="Fujii Y."/>
            <person name="Ozaki K."/>
            <person name="Hirao M."/>
            <person name="Ohmori Y."/>
            <person name="Kawabata A."/>
            <person name="Hikiji T."/>
            <person name="Kobatake N."/>
            <person name="Inagaki H."/>
            <person name="Ikema Y."/>
            <person name="Okamoto S."/>
            <person name="Okitani R."/>
            <person name="Kawakami T."/>
            <person name="Noguchi S."/>
            <person name="Itoh T."/>
            <person name="Shigeta K."/>
            <person name="Senba T."/>
            <person name="Matsumura K."/>
            <person name="Nakajima Y."/>
            <person name="Mizuno T."/>
            <person name="Morinaga M."/>
            <person name="Sasaki M."/>
            <person name="Togashi T."/>
            <person name="Oyama M."/>
            <person name="Hata H."/>
            <person name="Watanabe M."/>
            <person name="Komatsu T."/>
            <person name="Mizushima-Sugano J."/>
            <person name="Satoh T."/>
            <person name="Shirai Y."/>
            <person name="Takahashi Y."/>
            <person name="Nakagawa K."/>
            <person name="Okumura K."/>
            <person name="Nagase T."/>
            <person name="Nomura N."/>
            <person name="Kikuchi H."/>
            <person name="Masuho Y."/>
            <person name="Yamashita R."/>
            <person name="Nakai K."/>
            <person name="Yada T."/>
            <person name="Nakamura Y."/>
            <person name="Ohara O."/>
            <person name="Isogai T."/>
            <person name="Sugano S."/>
        </authorList>
    </citation>
    <scope>NUCLEOTIDE SEQUENCE [LARGE SCALE MRNA]</scope>
</reference>
<reference key="3">
    <citation type="submission" date="2004-06" db="EMBL/GenBank/DDBJ databases">
        <title>Cloning of human full open reading frames in Gateway(TM) system entry vector (pDONR201).</title>
        <authorList>
            <person name="Ebert L."/>
            <person name="Schick M."/>
            <person name="Neubert P."/>
            <person name="Schatten R."/>
            <person name="Henze S."/>
            <person name="Korn B."/>
        </authorList>
    </citation>
    <scope>NUCLEOTIDE SEQUENCE [LARGE SCALE MRNA]</scope>
</reference>
<reference key="4">
    <citation type="journal article" date="2004" name="Genome Res.">
        <title>The status, quality, and expansion of the NIH full-length cDNA project: the Mammalian Gene Collection (MGC).</title>
        <authorList>
            <consortium name="The MGC Project Team"/>
        </authorList>
    </citation>
    <scope>NUCLEOTIDE SEQUENCE [LARGE SCALE MRNA]</scope>
    <source>
        <tissue>Cervix</tissue>
    </source>
</reference>
<reference key="5">
    <citation type="journal article" date="2005" name="J. Biol. Chem.">
        <title>TBP-TAF complex SL1 directs RNA polymerase I pre-initiation complex formation and stabilizes upstream binding factor at the rDNA promoter.</title>
        <authorList>
            <person name="Friedrich J.K."/>
            <person name="Panov K.I."/>
            <person name="Cabart P."/>
            <person name="Russell J."/>
            <person name="Zomerdijk J.C.B.M."/>
        </authorList>
    </citation>
    <scope>FUNCTION OF THE SL1/TIF-IB COMPLEX</scope>
</reference>
<reference key="6">
    <citation type="journal article" date="2007" name="EMBO J.">
        <title>A novel TBP-associated factor of SL1 functions in RNA polymerase I transcription.</title>
        <authorList>
            <person name="Gorski J.J."/>
            <person name="Pathak S."/>
            <person name="Panov K."/>
            <person name="Kasciukovic T."/>
            <person name="Panova T."/>
            <person name="Russell J."/>
            <person name="Zomerdijk J.C.B.M."/>
        </authorList>
    </citation>
    <scope>FUNCTION</scope>
    <scope>IDENTIFICATION IN THE SL1/TIF-IB COMPLEX</scope>
    <scope>INTERACTION WITH UBTF</scope>
    <scope>SUBCELLULAR LOCATION</scope>
</reference>
<reference key="7">
    <citation type="journal article" date="2008" name="Proc. Natl. Acad. Sci. U.S.A.">
        <title>A quantitative atlas of mitotic phosphorylation.</title>
        <authorList>
            <person name="Dephoure N."/>
            <person name="Zhou C."/>
            <person name="Villen J."/>
            <person name="Beausoleil S.A."/>
            <person name="Bakalarski C.E."/>
            <person name="Elledge S.J."/>
            <person name="Gygi S.P."/>
        </authorList>
    </citation>
    <scope>PHOSPHORYLATION [LARGE SCALE ANALYSIS] AT SER-138</scope>
    <scope>IDENTIFICATION BY MASS SPECTROMETRY [LARGE SCALE ANALYSIS]</scope>
    <source>
        <tissue>Cervix carcinoma</tissue>
    </source>
</reference>
<reference key="8">
    <citation type="journal article" date="2009" name="Anal. Chem.">
        <title>Lys-N and trypsin cover complementary parts of the phosphoproteome in a refined SCX-based approach.</title>
        <authorList>
            <person name="Gauci S."/>
            <person name="Helbig A.O."/>
            <person name="Slijper M."/>
            <person name="Krijgsveld J."/>
            <person name="Heck A.J."/>
            <person name="Mohammed S."/>
        </authorList>
    </citation>
    <scope>IDENTIFICATION BY MASS SPECTROMETRY [LARGE SCALE ANALYSIS]</scope>
</reference>
<reference key="9">
    <citation type="journal article" date="2009" name="Sci. Signal.">
        <title>Quantitative phosphoproteomic analysis of T cell receptor signaling reveals system-wide modulation of protein-protein interactions.</title>
        <authorList>
            <person name="Mayya V."/>
            <person name="Lundgren D.H."/>
            <person name="Hwang S.-I."/>
            <person name="Rezaul K."/>
            <person name="Wu L."/>
            <person name="Eng J.K."/>
            <person name="Rodionov V."/>
            <person name="Han D.K."/>
        </authorList>
    </citation>
    <scope>PHOSPHORYLATION [LARGE SCALE ANALYSIS] AT SER-234</scope>
    <scope>IDENTIFICATION BY MASS SPECTROMETRY [LARGE SCALE ANALYSIS]</scope>
    <source>
        <tissue>Leukemic T-cell</tissue>
    </source>
</reference>
<reference key="10">
    <citation type="journal article" date="2011" name="Sci. Signal.">
        <title>System-wide temporal characterization of the proteome and phosphoproteome of human embryonic stem cell differentiation.</title>
        <authorList>
            <person name="Rigbolt K.T."/>
            <person name="Prokhorova T.A."/>
            <person name="Akimov V."/>
            <person name="Henningsen J."/>
            <person name="Johansen P.T."/>
            <person name="Kratchmarova I."/>
            <person name="Kassem M."/>
            <person name="Mann M."/>
            <person name="Olsen J.V."/>
            <person name="Blagoev B."/>
        </authorList>
    </citation>
    <scope>PHOSPHORYLATION [LARGE SCALE ANALYSIS] AT SER-23</scope>
    <scope>IDENTIFICATION BY MASS SPECTROMETRY [LARGE SCALE ANALYSIS]</scope>
</reference>
<reference key="11">
    <citation type="journal article" date="2013" name="J. Proteome Res.">
        <title>Toward a comprehensive characterization of a human cancer cell phosphoproteome.</title>
        <authorList>
            <person name="Zhou H."/>
            <person name="Di Palma S."/>
            <person name="Preisinger C."/>
            <person name="Peng M."/>
            <person name="Polat A.N."/>
            <person name="Heck A.J."/>
            <person name="Mohammed S."/>
        </authorList>
    </citation>
    <scope>PHOSPHORYLATION [LARGE SCALE ANALYSIS] AT SER-138 AND SER-234</scope>
    <scope>IDENTIFICATION BY MASS SPECTROMETRY [LARGE SCALE ANALYSIS]</scope>
    <source>
        <tissue>Cervix carcinoma</tissue>
        <tissue>Erythroleukemia</tissue>
    </source>
</reference>
<proteinExistence type="evidence at protein level"/>
<sequence length="278" mass="32058">MDKSGIDSLDHVTSDAVELANRSDNSSDSSLFKTQCIPYSPKGEKRNPIRKFVRTPESVHASDSSSDSSFEPIPLTIKAIFERFKNRKKRYKKKKKRRYQPTGRPRGRPEGRRNPIYSLIDKKKQFRSRGSGFPFLESENEKNAPWRKILTFEQAVARGFFNYIEKLKYEHHLKESLKQMNVGEDLENEDFDSRRYKFLDDDGSISPIEESTAEDEDATHLEDNECDIKLAGDSFIVSSEFPVRLSVYLEEEDITEEAALSKKRATKAKNTGQRGLKM</sequence>
<name>TAF1D_HUMAN</name>
<dbReference type="EMBL" id="AK027016">
    <property type="protein sequence ID" value="BAB15628.1"/>
    <property type="molecule type" value="mRNA"/>
</dbReference>
<dbReference type="EMBL" id="CR457369">
    <property type="protein sequence ID" value="CAG33650.1"/>
    <property type="molecule type" value="mRNA"/>
</dbReference>
<dbReference type="EMBL" id="BC001972">
    <property type="protein sequence ID" value="AAH01972.1"/>
    <property type="molecule type" value="mRNA"/>
</dbReference>
<dbReference type="CCDS" id="CCDS8293.1"/>
<dbReference type="RefSeq" id="NP_077021.1">
    <property type="nucleotide sequence ID" value="NM_024116.4"/>
</dbReference>
<dbReference type="BioGRID" id="122548">
    <property type="interactions" value="98"/>
</dbReference>
<dbReference type="ComplexPortal" id="CPX-7978">
    <property type="entry name" value="RNA polymerase I selectivity factor 1 complex"/>
</dbReference>
<dbReference type="FunCoup" id="Q9H5J8">
    <property type="interactions" value="1395"/>
</dbReference>
<dbReference type="IntAct" id="Q9H5J8">
    <property type="interactions" value="81"/>
</dbReference>
<dbReference type="MINT" id="Q9H5J8"/>
<dbReference type="STRING" id="9606.ENSP00000410409"/>
<dbReference type="iPTMnet" id="Q9H5J8"/>
<dbReference type="PhosphoSitePlus" id="Q9H5J8"/>
<dbReference type="BioMuta" id="TAF1D"/>
<dbReference type="DMDM" id="74733586"/>
<dbReference type="jPOST" id="Q9H5J8"/>
<dbReference type="MassIVE" id="Q9H5J8"/>
<dbReference type="PaxDb" id="9606-ENSP00000410409"/>
<dbReference type="PeptideAtlas" id="Q9H5J8"/>
<dbReference type="ProteomicsDB" id="80916"/>
<dbReference type="Pumba" id="Q9H5J8"/>
<dbReference type="Antibodypedia" id="53987">
    <property type="antibodies" value="63 antibodies from 11 providers"/>
</dbReference>
<dbReference type="DNASU" id="79101"/>
<dbReference type="Ensembl" id="ENST00000323981.6">
    <property type="protein sequence ID" value="ENSP00000314971.2"/>
    <property type="gene ID" value="ENSG00000166012.17"/>
</dbReference>
<dbReference type="Ensembl" id="ENST00000448108.7">
    <property type="protein sequence ID" value="ENSP00000410409.2"/>
    <property type="gene ID" value="ENSG00000166012.17"/>
</dbReference>
<dbReference type="Ensembl" id="ENST00000526015.5">
    <property type="protein sequence ID" value="ENSP00000435087.1"/>
    <property type="gene ID" value="ENSG00000166012.17"/>
</dbReference>
<dbReference type="GeneID" id="79101"/>
<dbReference type="KEGG" id="hsa:79101"/>
<dbReference type="MANE-Select" id="ENST00000448108.7">
    <property type="protein sequence ID" value="ENSP00000410409.2"/>
    <property type="RefSeq nucleotide sequence ID" value="NM_024116.4"/>
    <property type="RefSeq protein sequence ID" value="NP_077021.1"/>
</dbReference>
<dbReference type="UCSC" id="uc001ped.5">
    <property type="organism name" value="human"/>
</dbReference>
<dbReference type="AGR" id="HGNC:28759"/>
<dbReference type="CTD" id="79101"/>
<dbReference type="DisGeNET" id="79101"/>
<dbReference type="GeneCards" id="TAF1D"/>
<dbReference type="HGNC" id="HGNC:28759">
    <property type="gene designation" value="TAF1D"/>
</dbReference>
<dbReference type="HPA" id="ENSG00000166012">
    <property type="expression patterns" value="Low tissue specificity"/>
</dbReference>
<dbReference type="MIM" id="612823">
    <property type="type" value="gene"/>
</dbReference>
<dbReference type="neXtProt" id="NX_Q9H5J8"/>
<dbReference type="OpenTargets" id="ENSG00000166012"/>
<dbReference type="PharmGKB" id="PA164726421"/>
<dbReference type="VEuPathDB" id="HostDB:ENSG00000166012"/>
<dbReference type="eggNOG" id="ENOG502SQMW">
    <property type="taxonomic scope" value="Eukaryota"/>
</dbReference>
<dbReference type="GeneTree" id="ENSGT00390000009061"/>
<dbReference type="InParanoid" id="Q9H5J8"/>
<dbReference type="OMA" id="RKFVHTP"/>
<dbReference type="OrthoDB" id="9950926at2759"/>
<dbReference type="PAN-GO" id="Q9H5J8">
    <property type="GO annotations" value="1 GO annotation based on evolutionary models"/>
</dbReference>
<dbReference type="PhylomeDB" id="Q9H5J8"/>
<dbReference type="TreeFam" id="TF335756"/>
<dbReference type="PathwayCommons" id="Q9H5J8"/>
<dbReference type="Reactome" id="R-HSA-427359">
    <property type="pathway name" value="SIRT1 negatively regulates rRNA expression"/>
</dbReference>
<dbReference type="Reactome" id="R-HSA-427413">
    <property type="pathway name" value="NoRC negatively regulates rRNA expression"/>
</dbReference>
<dbReference type="Reactome" id="R-HSA-5250924">
    <property type="pathway name" value="B-WICH complex positively regulates rRNA expression"/>
</dbReference>
<dbReference type="Reactome" id="R-HSA-73762">
    <property type="pathway name" value="RNA Polymerase I Transcription Initiation"/>
</dbReference>
<dbReference type="Reactome" id="R-HSA-73772">
    <property type="pathway name" value="RNA Polymerase I Promoter Escape"/>
</dbReference>
<dbReference type="Reactome" id="R-HSA-73863">
    <property type="pathway name" value="RNA Polymerase I Transcription Termination"/>
</dbReference>
<dbReference type="SignaLink" id="Q9H5J8"/>
<dbReference type="SIGNOR" id="Q9H5J8"/>
<dbReference type="BioGRID-ORCS" id="79101">
    <property type="hits" value="365 hits in 1126 CRISPR screens"/>
</dbReference>
<dbReference type="ChiTaRS" id="TAF1D">
    <property type="organism name" value="human"/>
</dbReference>
<dbReference type="GenomeRNAi" id="79101"/>
<dbReference type="Pharos" id="Q9H5J8">
    <property type="development level" value="Tdark"/>
</dbReference>
<dbReference type="PRO" id="PR:Q9H5J8"/>
<dbReference type="Proteomes" id="UP000005640">
    <property type="component" value="Chromosome 11"/>
</dbReference>
<dbReference type="RNAct" id="Q9H5J8">
    <property type="molecule type" value="protein"/>
</dbReference>
<dbReference type="Bgee" id="ENSG00000166012">
    <property type="expression patterns" value="Expressed in body of pancreas and 202 other cell types or tissues"/>
</dbReference>
<dbReference type="ExpressionAtlas" id="Q9H5J8">
    <property type="expression patterns" value="baseline and differential"/>
</dbReference>
<dbReference type="GO" id="GO:0034451">
    <property type="term" value="C:centriolar satellite"/>
    <property type="evidence" value="ECO:0000314"/>
    <property type="project" value="HPA"/>
</dbReference>
<dbReference type="GO" id="GO:0005829">
    <property type="term" value="C:cytosol"/>
    <property type="evidence" value="ECO:0000314"/>
    <property type="project" value="HPA"/>
</dbReference>
<dbReference type="GO" id="GO:0072686">
    <property type="term" value="C:mitotic spindle"/>
    <property type="evidence" value="ECO:0000314"/>
    <property type="project" value="HPA"/>
</dbReference>
<dbReference type="GO" id="GO:0005730">
    <property type="term" value="C:nucleolus"/>
    <property type="evidence" value="ECO:0000314"/>
    <property type="project" value="HPA"/>
</dbReference>
<dbReference type="GO" id="GO:0005654">
    <property type="term" value="C:nucleoplasm"/>
    <property type="evidence" value="ECO:0000314"/>
    <property type="project" value="HPA"/>
</dbReference>
<dbReference type="GO" id="GO:0005668">
    <property type="term" value="C:RNA polymerase transcription factor SL1 complex"/>
    <property type="evidence" value="ECO:0007669"/>
    <property type="project" value="InterPro"/>
</dbReference>
<dbReference type="GO" id="GO:0003677">
    <property type="term" value="F:DNA binding"/>
    <property type="evidence" value="ECO:0007669"/>
    <property type="project" value="UniProtKB-KW"/>
</dbReference>
<dbReference type="GO" id="GO:0042802">
    <property type="term" value="F:identical protein binding"/>
    <property type="evidence" value="ECO:0000353"/>
    <property type="project" value="IntAct"/>
</dbReference>
<dbReference type="GO" id="GO:0006355">
    <property type="term" value="P:regulation of DNA-templated transcription"/>
    <property type="evidence" value="ECO:0007669"/>
    <property type="project" value="InterPro"/>
</dbReference>
<dbReference type="InterPro" id="IPR027976">
    <property type="entry name" value="TAF1D"/>
</dbReference>
<dbReference type="PANTHER" id="PTHR14562">
    <property type="entry name" value="TATA BOX-BINDING PROTEIN ASSOCIATED FACTOR RNA POLYMERASE I SUBUNIT D"/>
    <property type="match status" value="1"/>
</dbReference>
<dbReference type="PANTHER" id="PTHR14562:SF3">
    <property type="entry name" value="TATA BOX-BINDING PROTEIN-ASSOCIATED FACTOR RNA POLYMERASE I SUBUNIT D"/>
    <property type="match status" value="1"/>
</dbReference>
<dbReference type="Pfam" id="PF15333">
    <property type="entry name" value="TAF1D"/>
    <property type="match status" value="1"/>
</dbReference>
<keyword id="KW-0238">DNA-binding</keyword>
<keyword id="KW-0539">Nucleus</keyword>
<keyword id="KW-0597">Phosphoprotein</keyword>
<keyword id="KW-1267">Proteomics identification</keyword>
<keyword id="KW-1185">Reference proteome</keyword>
<keyword id="KW-0804">Transcription</keyword>
<keyword id="KW-0805">Transcription regulation</keyword>
<protein>
    <recommendedName>
        <fullName>TATA box-binding protein-associated factor RNA polymerase I subunit D</fullName>
    </recommendedName>
    <alternativeName>
        <fullName>RNA polymerase I-specific TBP-associated factor 41 kDa</fullName>
        <shortName>TAFI41</shortName>
    </alternativeName>
    <alternativeName>
        <fullName>TATA box-binding protein-associated factor 1D</fullName>
        <shortName>TBP-associated factor 1D</shortName>
    </alternativeName>
    <alternativeName>
        <fullName>Transcription initiation factor SL1/TIF-IB subunit D</fullName>
    </alternativeName>
</protein>
<evidence type="ECO:0000256" key="1">
    <source>
        <dbReference type="SAM" id="MobiDB-lite"/>
    </source>
</evidence>
<evidence type="ECO:0000269" key="2">
    <source>
    </source>
</evidence>
<evidence type="ECO:0000269" key="3">
    <source>
    </source>
</evidence>
<evidence type="ECO:0000269" key="4">
    <source>
    </source>
</evidence>
<evidence type="ECO:0000305" key="5"/>
<evidence type="ECO:0007744" key="6">
    <source>
    </source>
</evidence>
<evidence type="ECO:0007744" key="7">
    <source>
    </source>
</evidence>
<evidence type="ECO:0007744" key="8">
    <source>
    </source>
</evidence>
<evidence type="ECO:0007744" key="9">
    <source>
    </source>
</evidence>
<feature type="chain" id="PRO_0000250717" description="TATA box-binding protein-associated factor RNA polymerase I subunit D">
    <location>
        <begin position="1"/>
        <end position="278"/>
    </location>
</feature>
<feature type="region of interest" description="Disordered" evidence="1">
    <location>
        <begin position="20"/>
        <end position="71"/>
    </location>
</feature>
<feature type="region of interest" description="Disordered" evidence="1">
    <location>
        <begin position="88"/>
        <end position="116"/>
    </location>
</feature>
<feature type="compositionally biased region" description="Polar residues" evidence="1">
    <location>
        <begin position="22"/>
        <end position="33"/>
    </location>
</feature>
<feature type="compositionally biased region" description="Basic residues" evidence="1">
    <location>
        <begin position="88"/>
        <end position="99"/>
    </location>
</feature>
<feature type="modified residue" description="Phosphoserine" evidence="8">
    <location>
        <position position="23"/>
    </location>
</feature>
<feature type="modified residue" description="Phosphoserine" evidence="6 9">
    <location>
        <position position="138"/>
    </location>
</feature>
<feature type="modified residue" description="Phosphoserine" evidence="7 9">
    <location>
        <position position="234"/>
    </location>
</feature>
<feature type="sequence conflict" description="In Ref. 3; CAG33650." evidence="5" ref="3">
    <original>S</original>
    <variation>T</variation>
    <location>
        <position position="14"/>
    </location>
</feature>
<feature type="sequence conflict" description="In Ref. 3; CAG33650." evidence="5" ref="3">
    <original>R</original>
    <variation>G</variation>
    <location>
        <position position="97"/>
    </location>
</feature>
<feature type="sequence conflict" description="In Ref. 3; CAG33650." evidence="5" ref="3">
    <original>M</original>
    <variation>I</variation>
    <location>
        <position position="278"/>
    </location>
</feature>
<comment type="function">
    <text evidence="3 4">Component of the transcription factor SL1/TIF-IB complex, which is involved in the assembly of the PIC (preinitiation complex) during RNA polymerase I-dependent transcription. The rate of PIC formation probably is primarily dependent on the rate of association of SL1/TIF-IB with the rDNA promoter. SL1/TIF-IB is involved in stabilization of nucleolar transcription factor 1/UBTF on rDNA. Formation of SL1/TIF-IB excludes the association of TBP with TFIID subunits.</text>
</comment>
<comment type="subunit">
    <text evidence="4">Component of the transcription factor SL1/TIF-IB complex, composed of TBP and at least TAF1A, TAF1B, TAF1C and TAF1D. Interacts with UBTF.</text>
</comment>
<comment type="interaction">
    <interactant intactId="EBI-716128">
        <id>Q9H5J8</id>
    </interactant>
    <interactant intactId="EBI-739624">
        <id>Q8NHQ1</id>
        <label>CEP70</label>
    </interactant>
    <organismsDiffer>false</organismsDiffer>
    <experiments>4</experiments>
</comment>
<comment type="interaction">
    <interactant intactId="EBI-716128">
        <id>Q9H5J8</id>
    </interactant>
    <interactant intactId="EBI-5378683">
        <id>Q02577</id>
        <label>NHLH2</label>
    </interactant>
    <organismsDiffer>false</organismsDiffer>
    <experiments>3</experiments>
</comment>
<comment type="interaction">
    <interactant intactId="EBI-716128">
        <id>Q9H5J8</id>
    </interactant>
    <interactant intactId="EBI-713836">
        <id>P06746</id>
        <label>POLB</label>
    </interactant>
    <organismsDiffer>false</organismsDiffer>
    <experiments>4</experiments>
</comment>
<comment type="interaction">
    <interactant intactId="EBI-716128">
        <id>Q9H5J8</id>
    </interactant>
    <interactant intactId="EBI-716128">
        <id>Q9H5J8</id>
        <label>TAF1D</label>
    </interactant>
    <organismsDiffer>false</organismsDiffer>
    <experiments>3</experiments>
</comment>
<comment type="subcellular location">
    <subcellularLocation>
        <location evidence="2 4">Nucleus</location>
    </subcellularLocation>
</comment>
<organism>
    <name type="scientific">Homo sapiens</name>
    <name type="common">Human</name>
    <dbReference type="NCBI Taxonomy" id="9606"/>
    <lineage>
        <taxon>Eukaryota</taxon>
        <taxon>Metazoa</taxon>
        <taxon>Chordata</taxon>
        <taxon>Craniata</taxon>
        <taxon>Vertebrata</taxon>
        <taxon>Euteleostomi</taxon>
        <taxon>Mammalia</taxon>
        <taxon>Eutheria</taxon>
        <taxon>Euarchontoglires</taxon>
        <taxon>Primates</taxon>
        <taxon>Haplorrhini</taxon>
        <taxon>Catarrhini</taxon>
        <taxon>Hominidae</taxon>
        <taxon>Homo</taxon>
    </lineage>
</organism>